<accession>P9WLJ0</accession>
<accession>L0TAG2</accession>
<accession>Q10384</accession>
<reference key="1">
    <citation type="journal article" date="2002" name="J. Bacteriol.">
        <title>Whole-genome comparison of Mycobacterium tuberculosis clinical and laboratory strains.</title>
        <authorList>
            <person name="Fleischmann R.D."/>
            <person name="Alland D."/>
            <person name="Eisen J.A."/>
            <person name="Carpenter L."/>
            <person name="White O."/>
            <person name="Peterson J.D."/>
            <person name="DeBoy R.T."/>
            <person name="Dodson R.J."/>
            <person name="Gwinn M.L."/>
            <person name="Haft D.H."/>
            <person name="Hickey E.K."/>
            <person name="Kolonay J.F."/>
            <person name="Nelson W.C."/>
            <person name="Umayam L.A."/>
            <person name="Ermolaeva M.D."/>
            <person name="Salzberg S.L."/>
            <person name="Delcher A."/>
            <person name="Utterback T.R."/>
            <person name="Weidman J.F."/>
            <person name="Khouri H.M."/>
            <person name="Gill J."/>
            <person name="Mikula A."/>
            <person name="Bishai W."/>
            <person name="Jacobs W.R. Jr."/>
            <person name="Venter J.C."/>
            <person name="Fraser C.M."/>
        </authorList>
    </citation>
    <scope>NUCLEOTIDE SEQUENCE [LARGE SCALE GENOMIC DNA]</scope>
    <source>
        <strain>CDC 1551 / Oshkosh</strain>
    </source>
</reference>
<keyword id="KW-0255">Endonuclease</keyword>
<keyword id="KW-0269">Exonuclease</keyword>
<keyword id="KW-0378">Hydrolase</keyword>
<keyword id="KW-0511">Multifunctional enzyme</keyword>
<keyword id="KW-0540">Nuclease</keyword>
<keyword id="KW-1185">Reference proteome</keyword>
<name>Y2191_MYCTO</name>
<evidence type="ECO:0000255" key="1"/>
<evidence type="ECO:0000255" key="2">
    <source>
        <dbReference type="PROSITE-ProRule" id="PRU00977"/>
    </source>
</evidence>
<evidence type="ECO:0000256" key="3">
    <source>
        <dbReference type="SAM" id="MobiDB-lite"/>
    </source>
</evidence>
<evidence type="ECO:0000305" key="4"/>
<feature type="chain" id="PRO_0000427470" description="Putative bifunctional exonuclease/endonuclease protein MT2247">
    <location>
        <begin position="1"/>
        <end position="645"/>
    </location>
</feature>
<feature type="domain" description="Exonuclease" evidence="1">
    <location>
        <begin position="44"/>
        <end position="207"/>
    </location>
</feature>
<feature type="domain" description="GIY-YIG" evidence="2">
    <location>
        <begin position="248"/>
        <end position="326"/>
    </location>
</feature>
<feature type="region of interest" description="Disordered" evidence="3">
    <location>
        <begin position="603"/>
        <end position="645"/>
    </location>
</feature>
<feature type="compositionally biased region" description="Low complexity" evidence="3">
    <location>
        <begin position="635"/>
        <end position="645"/>
    </location>
</feature>
<organism>
    <name type="scientific">Mycobacterium tuberculosis (strain CDC 1551 / Oshkosh)</name>
    <dbReference type="NCBI Taxonomy" id="83331"/>
    <lineage>
        <taxon>Bacteria</taxon>
        <taxon>Bacillati</taxon>
        <taxon>Actinomycetota</taxon>
        <taxon>Actinomycetes</taxon>
        <taxon>Mycobacteriales</taxon>
        <taxon>Mycobacteriaceae</taxon>
        <taxon>Mycobacterium</taxon>
        <taxon>Mycobacterium tuberculosis complex</taxon>
    </lineage>
</organism>
<sequence>MQGPNVAAMGATGGTQLSFADLAHAQGAAWTPADEMSLRETTFVVVDLETTGGRTTGNDATPPDAITEIGAVKVCGGAVLGEFATLVNPQHSIPPQIVRLTGITTAMVGNAPTIDAVLPMFFEFAGDSVLVAHNAGFDIGFLRAAARRCDITWPQPQVLCTMRLARRVLSRDEAPSVRLAALARLFAVASNPTHRALDDARATVDVLHALIERVGNQGVHTYAELRSYLPNVTQAQRCKRVLAETLPHRPGVYLFRGPSGEVLYVGTAADLRRRVSQYFNGTDRRKRMTEMVMLASSIDHVECAHPLEAGVRELRMLSTHAPPYNRRSKFPYRWWWVALTDEAFPRLSVIRAPRHDRVVGPFRSRSKAAETAALLARCTGLRTCTTRLTRSARHGPACPELEVSACPAARDVTAAQYAEAVLRAAALIGGLDNAALAAAVQQVTELAERRRYESAARLRDHLATAIEALWHGQRLRALAALPELIAAKPDGPREGGYQLAVIRHGQLAAAGRAPRGVPPMPVVDAIRRGAQAILPTPAPLGGALVEEIALIARWLAEPGVRIVGVSNDAAGLASPVRSAGPWAAWAATARSAQLAGEQLSRGWQSDLPTEPHPSREQLFGRTGVDCRTGPPQPLLPGRQPFSTAG</sequence>
<gene>
    <name type="ordered locus">MT2247</name>
</gene>
<dbReference type="EC" id="3.1.-.-" evidence="4"/>
<dbReference type="EMBL" id="AE000516">
    <property type="protein sequence ID" value="AAK46533.1"/>
    <property type="status" value="ALT_INIT"/>
    <property type="molecule type" value="Genomic_DNA"/>
</dbReference>
<dbReference type="PIR" id="H70783">
    <property type="entry name" value="H70783"/>
</dbReference>
<dbReference type="SMR" id="P9WLJ0"/>
<dbReference type="KEGG" id="mtc:MT2247"/>
<dbReference type="PATRIC" id="fig|83331.31.peg.2423"/>
<dbReference type="HOGENOM" id="CLU_022933_0_0_11"/>
<dbReference type="Proteomes" id="UP000001020">
    <property type="component" value="Chromosome"/>
</dbReference>
<dbReference type="GO" id="GO:0009380">
    <property type="term" value="C:excinuclease repair complex"/>
    <property type="evidence" value="ECO:0007669"/>
    <property type="project" value="TreeGrafter"/>
</dbReference>
<dbReference type="GO" id="GO:0003677">
    <property type="term" value="F:DNA binding"/>
    <property type="evidence" value="ECO:0007669"/>
    <property type="project" value="InterPro"/>
</dbReference>
<dbReference type="GO" id="GO:0003887">
    <property type="term" value="F:DNA-directed DNA polymerase activity"/>
    <property type="evidence" value="ECO:0007669"/>
    <property type="project" value="InterPro"/>
</dbReference>
<dbReference type="GO" id="GO:0004519">
    <property type="term" value="F:endonuclease activity"/>
    <property type="evidence" value="ECO:0007669"/>
    <property type="project" value="UniProtKB-KW"/>
</dbReference>
<dbReference type="GO" id="GO:0004527">
    <property type="term" value="F:exonuclease activity"/>
    <property type="evidence" value="ECO:0007669"/>
    <property type="project" value="UniProtKB-KW"/>
</dbReference>
<dbReference type="GO" id="GO:0006260">
    <property type="term" value="P:DNA replication"/>
    <property type="evidence" value="ECO:0007669"/>
    <property type="project" value="InterPro"/>
</dbReference>
<dbReference type="GO" id="GO:0006289">
    <property type="term" value="P:nucleotide-excision repair"/>
    <property type="evidence" value="ECO:0007669"/>
    <property type="project" value="InterPro"/>
</dbReference>
<dbReference type="CDD" id="cd06127">
    <property type="entry name" value="DEDDh"/>
    <property type="match status" value="1"/>
</dbReference>
<dbReference type="CDD" id="cd10434">
    <property type="entry name" value="GIY-YIG_UvrC_Cho"/>
    <property type="match status" value="1"/>
</dbReference>
<dbReference type="FunFam" id="3.30.420.10:FF:000045">
    <property type="entry name" value="3'-5' exonuclease DinG"/>
    <property type="match status" value="1"/>
</dbReference>
<dbReference type="Gene3D" id="3.40.1440.10">
    <property type="entry name" value="GIY-YIG endonuclease"/>
    <property type="match status" value="1"/>
</dbReference>
<dbReference type="Gene3D" id="3.30.420.10">
    <property type="entry name" value="Ribonuclease H-like superfamily/Ribonuclease H"/>
    <property type="match status" value="1"/>
</dbReference>
<dbReference type="InterPro" id="IPR006054">
    <property type="entry name" value="DnaQ"/>
</dbReference>
<dbReference type="InterPro" id="IPR013520">
    <property type="entry name" value="Exonuclease_RNaseT/DNA_pol3"/>
</dbReference>
<dbReference type="InterPro" id="IPR000305">
    <property type="entry name" value="GIY-YIG_endonuc"/>
</dbReference>
<dbReference type="InterPro" id="IPR035901">
    <property type="entry name" value="GIY-YIG_endonuc_sf"/>
</dbReference>
<dbReference type="InterPro" id="IPR047296">
    <property type="entry name" value="GIY-YIG_UvrC_Cho"/>
</dbReference>
<dbReference type="InterPro" id="IPR012337">
    <property type="entry name" value="RNaseH-like_sf"/>
</dbReference>
<dbReference type="InterPro" id="IPR036397">
    <property type="entry name" value="RNaseH_sf"/>
</dbReference>
<dbReference type="InterPro" id="IPR050066">
    <property type="entry name" value="UvrABC_protein_C"/>
</dbReference>
<dbReference type="NCBIfam" id="TIGR00573">
    <property type="entry name" value="dnaq"/>
    <property type="match status" value="1"/>
</dbReference>
<dbReference type="NCBIfam" id="NF005903">
    <property type="entry name" value="PRK07883.1-1"/>
    <property type="match status" value="1"/>
</dbReference>
<dbReference type="NCBIfam" id="NF005905">
    <property type="entry name" value="PRK07883.1-3"/>
    <property type="match status" value="1"/>
</dbReference>
<dbReference type="NCBIfam" id="NF005907">
    <property type="entry name" value="PRK07883.1-5"/>
    <property type="match status" value="1"/>
</dbReference>
<dbReference type="PANTHER" id="PTHR30562:SF1">
    <property type="entry name" value="UVRABC SYSTEM PROTEIN C"/>
    <property type="match status" value="1"/>
</dbReference>
<dbReference type="PANTHER" id="PTHR30562">
    <property type="entry name" value="UVRC/OXIDOREDUCTASE"/>
    <property type="match status" value="1"/>
</dbReference>
<dbReference type="Pfam" id="PF00929">
    <property type="entry name" value="RNase_T"/>
    <property type="match status" value="1"/>
</dbReference>
<dbReference type="SMART" id="SM00479">
    <property type="entry name" value="EXOIII"/>
    <property type="match status" value="1"/>
</dbReference>
<dbReference type="SMART" id="SM00465">
    <property type="entry name" value="GIYc"/>
    <property type="match status" value="1"/>
</dbReference>
<dbReference type="SUPFAM" id="SSF82771">
    <property type="entry name" value="GIY-YIG endonuclease"/>
    <property type="match status" value="1"/>
</dbReference>
<dbReference type="SUPFAM" id="SSF53098">
    <property type="entry name" value="Ribonuclease H-like"/>
    <property type="match status" value="1"/>
</dbReference>
<dbReference type="PROSITE" id="PS50164">
    <property type="entry name" value="GIY_YIG"/>
    <property type="match status" value="1"/>
</dbReference>
<proteinExistence type="predicted"/>
<comment type="domain">
    <text evidence="4">Seems to contain an N-terminal exonuclease domain and a C-terminal UvrC-like endonuclease domain.</text>
</comment>
<comment type="sequence caution" evidence="4">
    <conflict type="erroneous initiation">
        <sequence resource="EMBL-CDS" id="AAK46533"/>
    </conflict>
</comment>
<protein>
    <recommendedName>
        <fullName evidence="4">Putative bifunctional exonuclease/endonuclease protein MT2247</fullName>
        <ecNumber evidence="4">3.1.-.-</ecNumber>
    </recommendedName>
</protein>